<reference key="1">
    <citation type="journal article" date="2004" name="Nat. Genet.">
        <title>Comparison of genome degradation in Paratyphi A and Typhi, human-restricted serovars of Salmonella enterica that cause typhoid.</title>
        <authorList>
            <person name="McClelland M."/>
            <person name="Sanderson K.E."/>
            <person name="Clifton S.W."/>
            <person name="Latreille P."/>
            <person name="Porwollik S."/>
            <person name="Sabo A."/>
            <person name="Meyer R."/>
            <person name="Bieri T."/>
            <person name="Ozersky P."/>
            <person name="McLellan M."/>
            <person name="Harkins C.R."/>
            <person name="Wang C."/>
            <person name="Nguyen C."/>
            <person name="Berghoff A."/>
            <person name="Elliott G."/>
            <person name="Kohlberg S."/>
            <person name="Strong C."/>
            <person name="Du F."/>
            <person name="Carter J."/>
            <person name="Kremizki C."/>
            <person name="Layman D."/>
            <person name="Leonard S."/>
            <person name="Sun H."/>
            <person name="Fulton L."/>
            <person name="Nash W."/>
            <person name="Miner T."/>
            <person name="Minx P."/>
            <person name="Delehaunty K."/>
            <person name="Fronick C."/>
            <person name="Magrini V."/>
            <person name="Nhan M."/>
            <person name="Warren W."/>
            <person name="Florea L."/>
            <person name="Spieth J."/>
            <person name="Wilson R.K."/>
        </authorList>
    </citation>
    <scope>NUCLEOTIDE SEQUENCE [LARGE SCALE GENOMIC DNA]</scope>
    <source>
        <strain>ATCC 9150 / SARB42</strain>
    </source>
</reference>
<sequence>MPRLILASTSPWRRALLEKLTIPFECAAPDVDETPMPGEAPRQLVLRLAQAKAQSLAARFPNHLIIGSDQICVLDGEITGKPLTEEKARQQLAKASGNIVTFYTGLALYNSASGHLQTEVEPFDVHFRHLSEAEIDDYVRKEHPLHCAGSFKSEGLGIALFERLEGRDPNTLIGLPLIALCQMLRREEMNPLNA</sequence>
<keyword id="KW-0963">Cytoplasm</keyword>
<keyword id="KW-0378">Hydrolase</keyword>
<keyword id="KW-0546">Nucleotide metabolism</keyword>
<protein>
    <recommendedName>
        <fullName evidence="1">7-methyl-GTP pyrophosphatase</fullName>
        <shortName evidence="1">m(7)GTP pyrophosphatase</shortName>
        <ecNumber evidence="1">3.6.1.-</ecNumber>
    </recommendedName>
</protein>
<accession>Q5PGT7</accession>
<gene>
    <name type="primary">yceF1</name>
    <name type="ordered locus">SPA1663</name>
</gene>
<feature type="chain" id="PRO_0000267421" description="7-methyl-GTP pyrophosphatase">
    <location>
        <begin position="1"/>
        <end position="194"/>
    </location>
</feature>
<feature type="active site" description="Proton acceptor" evidence="1">
    <location>
        <position position="69"/>
    </location>
</feature>
<feature type="site" description="Important for substrate specificity" evidence="1">
    <location>
        <position position="12"/>
    </location>
</feature>
<feature type="site" description="Important for substrate specificity" evidence="1">
    <location>
        <position position="70"/>
    </location>
</feature>
<feature type="site" description="Important for substrate specificity" evidence="1">
    <location>
        <position position="154"/>
    </location>
</feature>
<proteinExistence type="inferred from homology"/>
<dbReference type="EC" id="3.6.1.-" evidence="1"/>
<dbReference type="EMBL" id="CP000026">
    <property type="protein sequence ID" value="AAV77588.1"/>
    <property type="molecule type" value="Genomic_DNA"/>
</dbReference>
<dbReference type="RefSeq" id="WP_001137603.1">
    <property type="nucleotide sequence ID" value="NC_006511.1"/>
</dbReference>
<dbReference type="SMR" id="Q5PGT7"/>
<dbReference type="KEGG" id="spt:SPA1663"/>
<dbReference type="HOGENOM" id="CLU_040416_1_0_6"/>
<dbReference type="Proteomes" id="UP000008185">
    <property type="component" value="Chromosome"/>
</dbReference>
<dbReference type="GO" id="GO:0005737">
    <property type="term" value="C:cytoplasm"/>
    <property type="evidence" value="ECO:0007669"/>
    <property type="project" value="UniProtKB-SubCell"/>
</dbReference>
<dbReference type="GO" id="GO:0047429">
    <property type="term" value="F:nucleoside triphosphate diphosphatase activity"/>
    <property type="evidence" value="ECO:0007669"/>
    <property type="project" value="InterPro"/>
</dbReference>
<dbReference type="GO" id="GO:0009117">
    <property type="term" value="P:nucleotide metabolic process"/>
    <property type="evidence" value="ECO:0007669"/>
    <property type="project" value="UniProtKB-KW"/>
</dbReference>
<dbReference type="CDD" id="cd00555">
    <property type="entry name" value="Maf"/>
    <property type="match status" value="1"/>
</dbReference>
<dbReference type="FunFam" id="3.90.950.10:FF:000005">
    <property type="entry name" value="7-methyl-GTP pyrophosphatase"/>
    <property type="match status" value="1"/>
</dbReference>
<dbReference type="Gene3D" id="3.90.950.10">
    <property type="match status" value="1"/>
</dbReference>
<dbReference type="HAMAP" id="MF_00528">
    <property type="entry name" value="Maf"/>
    <property type="match status" value="1"/>
</dbReference>
<dbReference type="InterPro" id="IPR029001">
    <property type="entry name" value="ITPase-like_fam"/>
</dbReference>
<dbReference type="InterPro" id="IPR003697">
    <property type="entry name" value="Maf-like"/>
</dbReference>
<dbReference type="NCBIfam" id="TIGR00172">
    <property type="entry name" value="maf"/>
    <property type="match status" value="1"/>
</dbReference>
<dbReference type="PANTHER" id="PTHR43213:SF10">
    <property type="entry name" value="7-METHYL-GTP PYROPHOSPHATASE"/>
    <property type="match status" value="1"/>
</dbReference>
<dbReference type="PANTHER" id="PTHR43213">
    <property type="entry name" value="BIFUNCTIONAL DTTP/UTP PYROPHOSPHATASE/METHYLTRANSFERASE PROTEIN-RELATED"/>
    <property type="match status" value="1"/>
</dbReference>
<dbReference type="Pfam" id="PF02545">
    <property type="entry name" value="Maf"/>
    <property type="match status" value="1"/>
</dbReference>
<dbReference type="PIRSF" id="PIRSF006305">
    <property type="entry name" value="Maf"/>
    <property type="match status" value="1"/>
</dbReference>
<dbReference type="SUPFAM" id="SSF52972">
    <property type="entry name" value="ITPase-like"/>
    <property type="match status" value="1"/>
</dbReference>
<organism>
    <name type="scientific">Salmonella paratyphi A (strain ATCC 9150 / SARB42)</name>
    <dbReference type="NCBI Taxonomy" id="295319"/>
    <lineage>
        <taxon>Bacteria</taxon>
        <taxon>Pseudomonadati</taxon>
        <taxon>Pseudomonadota</taxon>
        <taxon>Gammaproteobacteria</taxon>
        <taxon>Enterobacterales</taxon>
        <taxon>Enterobacteriaceae</taxon>
        <taxon>Salmonella</taxon>
    </lineage>
</organism>
<evidence type="ECO:0000255" key="1">
    <source>
        <dbReference type="HAMAP-Rule" id="MF_00528"/>
    </source>
</evidence>
<comment type="function">
    <text evidence="1">Nucleoside triphosphate pyrophosphatase that hydrolyzes 7-methyl-GTP (m(7)GTP). May have a dual role in cell division arrest and in preventing the incorporation of modified nucleotides into cellular nucleic acids.</text>
</comment>
<comment type="catalytic activity">
    <reaction evidence="1">
        <text>N(7)-methyl-GTP + H2O = N(7)-methyl-GMP + diphosphate + H(+)</text>
        <dbReference type="Rhea" id="RHEA:58744"/>
        <dbReference type="ChEBI" id="CHEBI:15377"/>
        <dbReference type="ChEBI" id="CHEBI:15378"/>
        <dbReference type="ChEBI" id="CHEBI:33019"/>
        <dbReference type="ChEBI" id="CHEBI:58285"/>
        <dbReference type="ChEBI" id="CHEBI:87133"/>
    </reaction>
</comment>
<comment type="cofactor">
    <cofactor evidence="1">
        <name>a divalent metal cation</name>
        <dbReference type="ChEBI" id="CHEBI:60240"/>
    </cofactor>
</comment>
<comment type="subcellular location">
    <subcellularLocation>
        <location evidence="1">Cytoplasm</location>
    </subcellularLocation>
</comment>
<comment type="similarity">
    <text evidence="1">Belongs to the Maf family. YceF subfamily.</text>
</comment>
<name>NTPPB_SALPA</name>